<comment type="function">
    <text evidence="1">Involved in the regulation of glutamine synthetase GlnA, a key enzyme in the process to assimilate ammonia. When cellular nitrogen levels are high, the C-terminal adenylyl transferase (AT) inactivates GlnA by covalent transfer of an adenylyl group from ATP to specific tyrosine residue of GlnA, thus reducing its activity. Conversely, when nitrogen levels are low, the N-terminal adenylyl removase (AR) activates GlnA by removing the adenylyl group by phosphorolysis, increasing its activity. The regulatory region of GlnE binds the signal transduction protein PII (GlnB) which indicates the nitrogen status of the cell.</text>
</comment>
<comment type="catalytic activity">
    <reaction evidence="1">
        <text>[glutamine synthetase]-O(4)-(5'-adenylyl)-L-tyrosine + phosphate = [glutamine synthetase]-L-tyrosine + ADP</text>
        <dbReference type="Rhea" id="RHEA:43716"/>
        <dbReference type="Rhea" id="RHEA-COMP:10660"/>
        <dbReference type="Rhea" id="RHEA-COMP:10661"/>
        <dbReference type="ChEBI" id="CHEBI:43474"/>
        <dbReference type="ChEBI" id="CHEBI:46858"/>
        <dbReference type="ChEBI" id="CHEBI:83624"/>
        <dbReference type="ChEBI" id="CHEBI:456216"/>
        <dbReference type="EC" id="2.7.7.89"/>
    </reaction>
</comment>
<comment type="catalytic activity">
    <reaction evidence="1">
        <text>[glutamine synthetase]-L-tyrosine + ATP = [glutamine synthetase]-O(4)-(5'-adenylyl)-L-tyrosine + diphosphate</text>
        <dbReference type="Rhea" id="RHEA:18589"/>
        <dbReference type="Rhea" id="RHEA-COMP:10660"/>
        <dbReference type="Rhea" id="RHEA-COMP:10661"/>
        <dbReference type="ChEBI" id="CHEBI:30616"/>
        <dbReference type="ChEBI" id="CHEBI:33019"/>
        <dbReference type="ChEBI" id="CHEBI:46858"/>
        <dbReference type="ChEBI" id="CHEBI:83624"/>
        <dbReference type="EC" id="2.7.7.42"/>
    </reaction>
</comment>
<comment type="cofactor">
    <cofactor evidence="1">
        <name>Mg(2+)</name>
        <dbReference type="ChEBI" id="CHEBI:18420"/>
    </cofactor>
</comment>
<comment type="similarity">
    <text evidence="1">Belongs to the GlnE family.</text>
</comment>
<organism>
    <name type="scientific">Leifsonia xyli subsp. xyli (strain CTCB07)</name>
    <dbReference type="NCBI Taxonomy" id="281090"/>
    <lineage>
        <taxon>Bacteria</taxon>
        <taxon>Bacillati</taxon>
        <taxon>Actinomycetota</taxon>
        <taxon>Actinomycetes</taxon>
        <taxon>Micrococcales</taxon>
        <taxon>Microbacteriaceae</taxon>
        <taxon>Leifsonia</taxon>
    </lineage>
</organism>
<proteinExistence type="inferred from homology"/>
<reference key="1">
    <citation type="journal article" date="2004" name="Mol. Plant Microbe Interact.">
        <title>The genome sequence of the Gram-positive sugarcane pathogen Leifsonia xyli subsp. xyli.</title>
        <authorList>
            <person name="Monteiro-Vitorello C.B."/>
            <person name="Camargo L.E.A."/>
            <person name="Van Sluys M.A."/>
            <person name="Kitajima J.P."/>
            <person name="Truffi D."/>
            <person name="do Amaral A.M."/>
            <person name="Harakava R."/>
            <person name="de Oliveira J.C.F."/>
            <person name="Wood D."/>
            <person name="de Oliveira M.C."/>
            <person name="Miyaki C.Y."/>
            <person name="Takita M.A."/>
            <person name="da Silva A.C.R."/>
            <person name="Furlan L.R."/>
            <person name="Carraro D.M."/>
            <person name="Camarotte G."/>
            <person name="Almeida N.F. Jr."/>
            <person name="Carrer H."/>
            <person name="Coutinho L.L."/>
            <person name="El-Dorry H.A."/>
            <person name="Ferro M.I.T."/>
            <person name="Gagliardi P.R."/>
            <person name="Giglioti E."/>
            <person name="Goldman M.H.S."/>
            <person name="Goldman G.H."/>
            <person name="Kimura E.T."/>
            <person name="Ferro E.S."/>
            <person name="Kuramae E.E."/>
            <person name="Lemos E.G.M."/>
            <person name="Lemos M.V.F."/>
            <person name="Mauro S.M.Z."/>
            <person name="Machado M.A."/>
            <person name="Marino C.L."/>
            <person name="Menck C.F."/>
            <person name="Nunes L.R."/>
            <person name="Oliveira R.C."/>
            <person name="Pereira G.G."/>
            <person name="Siqueira W."/>
            <person name="de Souza A.A."/>
            <person name="Tsai S.M."/>
            <person name="Zanca A.S."/>
            <person name="Simpson A.J.G."/>
            <person name="Brumbley S.M."/>
            <person name="Setubal J.C."/>
        </authorList>
    </citation>
    <scope>NUCLEOTIDE SEQUENCE [LARGE SCALE GENOMIC DNA]</scope>
    <source>
        <strain>CTCB07</strain>
    </source>
</reference>
<gene>
    <name evidence="1" type="primary">glnE</name>
    <name type="ordered locus">Lxx10020</name>
</gene>
<keyword id="KW-0067">ATP-binding</keyword>
<keyword id="KW-0460">Magnesium</keyword>
<keyword id="KW-0511">Multifunctional enzyme</keyword>
<keyword id="KW-0547">Nucleotide-binding</keyword>
<keyword id="KW-0548">Nucleotidyltransferase</keyword>
<keyword id="KW-1185">Reference proteome</keyword>
<keyword id="KW-0808">Transferase</keyword>
<sequence length="1007" mass="110040">MTREQLSLTVLARAGFVGLSSVRAELEELATLTGFPVDDLLPALLAAADPDTALRLALRLLRRAPDQAAWFLRSWKDARRLLRVIGASEGAAEFFLRQPVELASLHRPVTALPTAAELREDLLDAVGAVGGFASVAEEEAWTALRVRYRRRLVQLASFDLEQDDPVAGFDGVAAALSDLAGAALDASLAVARRQASGSGPGRFPEAEVRATRFAIIGMGKAGARELNYVSDVDVIYVTDGAEDAGVPPGRAVDIATRLAVLTQRGIQDPALEPGLWEVDSNLRPEGRDGALVRTLDSHLAYYDRWAKGWEFQALLKARSLAGDWELGERYVTALAPRVWSSASRENFVESVQRMRERVTDNIPDGDLHYQLKLGPGGLRDVEFTVQLLQLVHGQTDGLVRQRDTLSALAALAGQSYIGREEAAAFSHDYRTLRLLEHRLQLRHLRRTHLMPRDEVEVRILARATGLAASAGQLLTQWNEIKHRVRGLHERLFYRPLLSAVAAMPNEDARLSGEAGLTSEQAQARLAAIGFRDPRGALAHIAALTAGVSRRATIQRHLLPVMLQWFSAGADPDYGLLSFRRLSDDLGGTHWYLRMLRDSSGAAERLTRVLSGSRFVAELLGRIPESVAWLESEEELRPRAPELLREETAAILARHESAETAAAALRAVRRREVLRLAFSGILGFSTIEELARGLSAVTENLLTGVLGAIRAARDDAAALEFAIIGMGRFGGRELGFGSDADIMYVFRPLAAGQDAAHRAATAIVADLNRLTEDSALPVDLDIGLRPEGKNGPSVRSLDSYRAYYARWSLAWEAQALLRARGVAGDSALIGDFETLADEVRYPASIGEQAVREVKRIKARIENERLPQGADPARHLKLGRGSLSDVEWFVQLVQLQHAAAHPALRTPSTLDALAVAAGEGFVSGEDAARLRAAWVFASRARSAMTLWTNKTADVLPFDRVVLDGVARLLEYPPGAASRMEEDYLAVTRRARAVFEREFYGPPQRPATTA</sequence>
<name>GLNE_LEIXX</name>
<feature type="chain" id="PRO_0000209251" description="Bifunctional glutamine synthetase adenylyltransferase/adenylyl-removing enzyme">
    <location>
        <begin position="1"/>
        <end position="1007"/>
    </location>
</feature>
<feature type="region of interest" description="Adenylyl removase" evidence="1">
    <location>
        <begin position="1"/>
        <end position="496"/>
    </location>
</feature>
<feature type="region of interest" description="Adenylyl transferase" evidence="1">
    <location>
        <begin position="505"/>
        <end position="1007"/>
    </location>
</feature>
<evidence type="ECO:0000255" key="1">
    <source>
        <dbReference type="HAMAP-Rule" id="MF_00802"/>
    </source>
</evidence>
<protein>
    <recommendedName>
        <fullName evidence="1">Bifunctional glutamine synthetase adenylyltransferase/adenylyl-removing enzyme</fullName>
    </recommendedName>
    <alternativeName>
        <fullName evidence="1">ATP:glutamine synthetase adenylyltransferase</fullName>
    </alternativeName>
    <alternativeName>
        <fullName evidence="1">ATase</fullName>
    </alternativeName>
    <domain>
        <recommendedName>
            <fullName evidence="1">Glutamine synthetase adenylyl-L-tyrosine phosphorylase</fullName>
            <ecNumber evidence="1">2.7.7.89</ecNumber>
        </recommendedName>
        <alternativeName>
            <fullName evidence="1">Adenylyl removase</fullName>
            <shortName evidence="1">AR</shortName>
            <shortName evidence="1">AT-N</shortName>
        </alternativeName>
    </domain>
    <domain>
        <recommendedName>
            <fullName evidence="1">Glutamine synthetase adenylyl transferase</fullName>
            <ecNumber evidence="1">2.7.7.42</ecNumber>
        </recommendedName>
        <alternativeName>
            <fullName evidence="1">Adenylyl transferase</fullName>
            <shortName evidence="1">AT</shortName>
            <shortName evidence="1">AT-C</shortName>
        </alternativeName>
    </domain>
</protein>
<dbReference type="EC" id="2.7.7.89" evidence="1"/>
<dbReference type="EC" id="2.7.7.42" evidence="1"/>
<dbReference type="EMBL" id="AE016822">
    <property type="protein sequence ID" value="AAT88873.1"/>
    <property type="molecule type" value="Genomic_DNA"/>
</dbReference>
<dbReference type="RefSeq" id="WP_011185870.1">
    <property type="nucleotide sequence ID" value="NC_006087.1"/>
</dbReference>
<dbReference type="SMR" id="Q6AFH2"/>
<dbReference type="STRING" id="281090.Lxx10020"/>
<dbReference type="KEGG" id="lxx:Lxx10020"/>
<dbReference type="eggNOG" id="COG1391">
    <property type="taxonomic scope" value="Bacteria"/>
</dbReference>
<dbReference type="HOGENOM" id="CLU_006233_1_0_11"/>
<dbReference type="Proteomes" id="UP000001306">
    <property type="component" value="Chromosome"/>
</dbReference>
<dbReference type="GO" id="GO:0005829">
    <property type="term" value="C:cytosol"/>
    <property type="evidence" value="ECO:0007669"/>
    <property type="project" value="TreeGrafter"/>
</dbReference>
<dbReference type="GO" id="GO:0008882">
    <property type="term" value="F:[glutamate-ammonia-ligase] adenylyltransferase activity"/>
    <property type="evidence" value="ECO:0007669"/>
    <property type="project" value="UniProtKB-UniRule"/>
</dbReference>
<dbReference type="GO" id="GO:0047388">
    <property type="term" value="F:[glutamine synthetase]-adenylyl-L-tyrosine phosphorylase activity"/>
    <property type="evidence" value="ECO:0007669"/>
    <property type="project" value="UniProtKB-EC"/>
</dbReference>
<dbReference type="GO" id="GO:0005524">
    <property type="term" value="F:ATP binding"/>
    <property type="evidence" value="ECO:0007669"/>
    <property type="project" value="UniProtKB-UniRule"/>
</dbReference>
<dbReference type="GO" id="GO:0000287">
    <property type="term" value="F:magnesium ion binding"/>
    <property type="evidence" value="ECO:0007669"/>
    <property type="project" value="UniProtKB-UniRule"/>
</dbReference>
<dbReference type="GO" id="GO:0000820">
    <property type="term" value="P:regulation of glutamine family amino acid metabolic process"/>
    <property type="evidence" value="ECO:0007669"/>
    <property type="project" value="UniProtKB-UniRule"/>
</dbReference>
<dbReference type="CDD" id="cd05401">
    <property type="entry name" value="NT_GlnE_GlnD_like"/>
    <property type="match status" value="2"/>
</dbReference>
<dbReference type="Gene3D" id="3.30.460.10">
    <property type="entry name" value="Beta Polymerase, domain 2"/>
    <property type="match status" value="2"/>
</dbReference>
<dbReference type="Gene3D" id="1.20.120.330">
    <property type="entry name" value="Nucleotidyltransferases domain 2"/>
    <property type="match status" value="2"/>
</dbReference>
<dbReference type="HAMAP" id="MF_00802">
    <property type="entry name" value="GlnE"/>
    <property type="match status" value="1"/>
</dbReference>
<dbReference type="InterPro" id="IPR023057">
    <property type="entry name" value="GlnE"/>
</dbReference>
<dbReference type="InterPro" id="IPR005190">
    <property type="entry name" value="GlnE_rpt_dom"/>
</dbReference>
<dbReference type="InterPro" id="IPR043519">
    <property type="entry name" value="NT_sf"/>
</dbReference>
<dbReference type="InterPro" id="IPR013546">
    <property type="entry name" value="PII_UdlTrfase/GS_AdlTrfase"/>
</dbReference>
<dbReference type="NCBIfam" id="NF010707">
    <property type="entry name" value="PRK14109.1"/>
    <property type="match status" value="1"/>
</dbReference>
<dbReference type="PANTHER" id="PTHR30621:SF0">
    <property type="entry name" value="BIFUNCTIONAL GLUTAMINE SYNTHETASE ADENYLYLTRANSFERASE_ADENYLYL-REMOVING ENZYME"/>
    <property type="match status" value="1"/>
</dbReference>
<dbReference type="PANTHER" id="PTHR30621">
    <property type="entry name" value="GLUTAMINE SYNTHETASE ADENYLYLTRANSFERASE"/>
    <property type="match status" value="1"/>
</dbReference>
<dbReference type="Pfam" id="PF08335">
    <property type="entry name" value="GlnD_UR_UTase"/>
    <property type="match status" value="2"/>
</dbReference>
<dbReference type="Pfam" id="PF03710">
    <property type="entry name" value="GlnE"/>
    <property type="match status" value="2"/>
</dbReference>
<dbReference type="SUPFAM" id="SSF81301">
    <property type="entry name" value="Nucleotidyltransferase"/>
    <property type="match status" value="2"/>
</dbReference>
<dbReference type="SUPFAM" id="SSF81593">
    <property type="entry name" value="Nucleotidyltransferase substrate binding subunit/domain"/>
    <property type="match status" value="2"/>
</dbReference>
<accession>Q6AFH2</accession>